<organism>
    <name type="scientific">Rattus norvegicus</name>
    <name type="common">Rat</name>
    <dbReference type="NCBI Taxonomy" id="10116"/>
    <lineage>
        <taxon>Eukaryota</taxon>
        <taxon>Metazoa</taxon>
        <taxon>Chordata</taxon>
        <taxon>Craniata</taxon>
        <taxon>Vertebrata</taxon>
        <taxon>Euteleostomi</taxon>
        <taxon>Mammalia</taxon>
        <taxon>Eutheria</taxon>
        <taxon>Euarchontoglires</taxon>
        <taxon>Glires</taxon>
        <taxon>Rodentia</taxon>
        <taxon>Myomorpha</taxon>
        <taxon>Muroidea</taxon>
        <taxon>Muridae</taxon>
        <taxon>Murinae</taxon>
        <taxon>Rattus</taxon>
    </lineage>
</organism>
<gene>
    <name type="primary">Cyb5r4</name>
    <name type="synonym">Ncb5or</name>
</gene>
<accession>Q68EJ0</accession>
<accession>Q6VXY2</accession>
<accession>Q6VXY3</accession>
<accession>Q9EPZ4</accession>
<sequence>MLNVPSQAFPAPGSQQRVASQGRSKVPLKQGRSLMDWFRLTKSGKDFTGLKGGLIEVTEEELKKHNKKDDCWICIRGFVYNVSPYMEYHPGGEDELMRAAGADGTDLFNEVHRWVNYESMLKECLVGRMAVKPAVPKDCHEGKRVLNGMLPKSQVTDTLPREGPSSPSYDWFQTESSVTIVIYTKQKNINLDSVIVDLQDDSLRAEAVIKDHSYLIHIGLSHEVQENFSVRVIENVGKIEIVLQKKETVSWKCLGDPLEKHDSFIPKKDTGLYYRQCQLISKEDVTHDTRLFCLMLPPSTHLQVPVGQHVYLKLSVTGAEIVKPYTPVSESLLSDFKEPVLSPNKYIYFLIKIYPAGLFTPELDRLQIGDFVSVSGPEGNFKVSKLQEVEDLFLLAAGTGFTPMVTVLNHALTHMSSLRKVKLMFFNKTEDDIIWRCQLEKLALKDKRFHVEYVLSAPSPEWNGKQGHVSRALLSEFLQRSLENSKVFLCICGPTPFTDEGIRLLHDLNFSDDEIHGFTA</sequence>
<evidence type="ECO:0000250" key="1"/>
<evidence type="ECO:0000250" key="2">
    <source>
        <dbReference type="UniProtKB" id="Q7L1T6"/>
    </source>
</evidence>
<evidence type="ECO:0000255" key="3">
    <source>
        <dbReference type="PROSITE-ProRule" id="PRU00279"/>
    </source>
</evidence>
<evidence type="ECO:0000255" key="4">
    <source>
        <dbReference type="PROSITE-ProRule" id="PRU00547"/>
    </source>
</evidence>
<evidence type="ECO:0000255" key="5">
    <source>
        <dbReference type="PROSITE-ProRule" id="PRU00716"/>
    </source>
</evidence>
<evidence type="ECO:0000256" key="6">
    <source>
        <dbReference type="SAM" id="MobiDB-lite"/>
    </source>
</evidence>
<evidence type="ECO:0000269" key="7">
    <source>
    </source>
</evidence>
<evidence type="ECO:0000269" key="8">
    <source>
    </source>
</evidence>
<evidence type="ECO:0000303" key="9">
    <source>
    </source>
</evidence>
<evidence type="ECO:0000305" key="10"/>
<dbReference type="EC" id="1.6.2.2"/>
<dbReference type="EMBL" id="BC080240">
    <property type="protein sequence ID" value="AAH80240.1"/>
    <property type="status" value="ALT_INIT"/>
    <property type="molecule type" value="mRNA"/>
</dbReference>
<dbReference type="EMBL" id="AF307840">
    <property type="protein sequence ID" value="AAG45053.1"/>
    <property type="molecule type" value="mRNA"/>
</dbReference>
<dbReference type="EMBL" id="AY321370">
    <property type="protein sequence ID" value="AAQ83902.1"/>
    <property type="molecule type" value="mRNA"/>
</dbReference>
<dbReference type="EMBL" id="AY321371">
    <property type="protein sequence ID" value="AAQ83903.1"/>
    <property type="molecule type" value="mRNA"/>
</dbReference>
<dbReference type="RefSeq" id="NP_596918.3">
    <property type="nucleotide sequence ID" value="NM_133427.3"/>
</dbReference>
<dbReference type="SMR" id="Q68EJ0"/>
<dbReference type="FunCoup" id="Q68EJ0">
    <property type="interactions" value="3030"/>
</dbReference>
<dbReference type="STRING" id="10116.ENSRNOP00000013909"/>
<dbReference type="GlyGen" id="Q68EJ0">
    <property type="glycosylation" value="1 site"/>
</dbReference>
<dbReference type="PhosphoSitePlus" id="Q68EJ0"/>
<dbReference type="jPOST" id="Q68EJ0"/>
<dbReference type="PaxDb" id="10116-ENSRNOP00000013909"/>
<dbReference type="GeneID" id="171015"/>
<dbReference type="KEGG" id="rno:171015"/>
<dbReference type="UCSC" id="RGD:621834">
    <molecule id="Q68EJ0-1"/>
    <property type="organism name" value="rat"/>
</dbReference>
<dbReference type="AGR" id="RGD:621834"/>
<dbReference type="CTD" id="51167"/>
<dbReference type="RGD" id="621834">
    <property type="gene designation" value="Cyb5r4"/>
</dbReference>
<dbReference type="eggNOG" id="KOG0534">
    <property type="taxonomic scope" value="Eukaryota"/>
</dbReference>
<dbReference type="eggNOG" id="KOG0536">
    <property type="taxonomic scope" value="Eukaryota"/>
</dbReference>
<dbReference type="InParanoid" id="Q68EJ0"/>
<dbReference type="OrthoDB" id="432299at2759"/>
<dbReference type="PhylomeDB" id="Q68EJ0"/>
<dbReference type="BRENDA" id="1.6.2.2">
    <property type="organism ID" value="5301"/>
</dbReference>
<dbReference type="Reactome" id="R-RNO-1237044">
    <property type="pathway name" value="Erythrocytes take up carbon dioxide and release oxygen"/>
</dbReference>
<dbReference type="SABIO-RK" id="Q68EJ0"/>
<dbReference type="PRO" id="PR:Q68EJ0"/>
<dbReference type="Proteomes" id="UP000002494">
    <property type="component" value="Unplaced"/>
</dbReference>
<dbReference type="GO" id="GO:0005737">
    <property type="term" value="C:cytoplasm"/>
    <property type="evidence" value="ECO:0000318"/>
    <property type="project" value="GO_Central"/>
</dbReference>
<dbReference type="GO" id="GO:0005783">
    <property type="term" value="C:endoplasmic reticulum"/>
    <property type="evidence" value="ECO:0000266"/>
    <property type="project" value="RGD"/>
</dbReference>
<dbReference type="GO" id="GO:0048471">
    <property type="term" value="C:perinuclear region of cytoplasm"/>
    <property type="evidence" value="ECO:0000266"/>
    <property type="project" value="RGD"/>
</dbReference>
<dbReference type="GO" id="GO:0004128">
    <property type="term" value="F:cytochrome-b5 reductase activity, acting on NAD(P)H"/>
    <property type="evidence" value="ECO:0000266"/>
    <property type="project" value="RGD"/>
</dbReference>
<dbReference type="GO" id="GO:0050660">
    <property type="term" value="F:flavin adenine dinucleotide binding"/>
    <property type="evidence" value="ECO:0000314"/>
    <property type="project" value="RGD"/>
</dbReference>
<dbReference type="GO" id="GO:0020037">
    <property type="term" value="F:heme binding"/>
    <property type="evidence" value="ECO:0000314"/>
    <property type="project" value="RGD"/>
</dbReference>
<dbReference type="GO" id="GO:0046872">
    <property type="term" value="F:metal ion binding"/>
    <property type="evidence" value="ECO:0007669"/>
    <property type="project" value="UniProtKB-KW"/>
</dbReference>
<dbReference type="GO" id="GO:0016174">
    <property type="term" value="F:NAD(P)H oxidase H2O2-forming activity"/>
    <property type="evidence" value="ECO:0000266"/>
    <property type="project" value="RGD"/>
</dbReference>
<dbReference type="GO" id="GO:0003958">
    <property type="term" value="F:NADPH-hemoprotein reductase activity"/>
    <property type="evidence" value="ECO:0000314"/>
    <property type="project" value="RGD"/>
</dbReference>
<dbReference type="GO" id="GO:0016653">
    <property type="term" value="F:oxidoreductase activity, acting on NAD(P)H, heme protein as acceptor"/>
    <property type="evidence" value="ECO:0000266"/>
    <property type="project" value="RGD"/>
</dbReference>
<dbReference type="GO" id="GO:0048468">
    <property type="term" value="P:cell development"/>
    <property type="evidence" value="ECO:0000266"/>
    <property type="project" value="RGD"/>
</dbReference>
<dbReference type="GO" id="GO:0042593">
    <property type="term" value="P:glucose homeostasis"/>
    <property type="evidence" value="ECO:0000266"/>
    <property type="project" value="RGD"/>
</dbReference>
<dbReference type="GO" id="GO:0030073">
    <property type="term" value="P:insulin secretion"/>
    <property type="evidence" value="ECO:0000266"/>
    <property type="project" value="RGD"/>
</dbReference>
<dbReference type="GO" id="GO:0006739">
    <property type="term" value="P:NADP metabolic process"/>
    <property type="evidence" value="ECO:0000314"/>
    <property type="project" value="RGD"/>
</dbReference>
<dbReference type="GO" id="GO:0072593">
    <property type="term" value="P:reactive oxygen species metabolic process"/>
    <property type="evidence" value="ECO:0000266"/>
    <property type="project" value="RGD"/>
</dbReference>
<dbReference type="GO" id="GO:0046677">
    <property type="term" value="P:response to antibiotic"/>
    <property type="evidence" value="ECO:0000266"/>
    <property type="project" value="RGD"/>
</dbReference>
<dbReference type="GO" id="GO:0006801">
    <property type="term" value="P:superoxide metabolic process"/>
    <property type="evidence" value="ECO:0000266"/>
    <property type="project" value="RGD"/>
</dbReference>
<dbReference type="CDD" id="cd06183">
    <property type="entry name" value="cyt_b5_reduct_like"/>
    <property type="match status" value="1"/>
</dbReference>
<dbReference type="CDD" id="cd06490">
    <property type="entry name" value="p23_NCB5OR"/>
    <property type="match status" value="1"/>
</dbReference>
<dbReference type="FunFam" id="2.40.30.10:FF:000063">
    <property type="entry name" value="Cytochrome b5 reductase 4"/>
    <property type="match status" value="1"/>
</dbReference>
<dbReference type="FunFam" id="3.10.120.10:FF:000001">
    <property type="entry name" value="Cytochrome b5 reductase 4"/>
    <property type="match status" value="1"/>
</dbReference>
<dbReference type="FunFam" id="3.40.50.80:FF:000021">
    <property type="entry name" value="Cytochrome b5 reductase 4"/>
    <property type="match status" value="1"/>
</dbReference>
<dbReference type="FunFam" id="2.60.40.790:FF:000019">
    <property type="entry name" value="cytochrome b5 reductase 4 isoform X1"/>
    <property type="match status" value="1"/>
</dbReference>
<dbReference type="Gene3D" id="2.60.40.790">
    <property type="match status" value="1"/>
</dbReference>
<dbReference type="Gene3D" id="3.10.120.10">
    <property type="entry name" value="Cytochrome b5-like heme/steroid binding domain"/>
    <property type="match status" value="1"/>
</dbReference>
<dbReference type="Gene3D" id="3.40.50.80">
    <property type="entry name" value="Nucleotide-binding domain of ferredoxin-NADP reductase (FNR) module"/>
    <property type="match status" value="1"/>
</dbReference>
<dbReference type="Gene3D" id="2.40.30.10">
    <property type="entry name" value="Translation factors"/>
    <property type="match status" value="1"/>
</dbReference>
<dbReference type="InterPro" id="IPR008333">
    <property type="entry name" value="Cbr1-like_FAD-bd_dom"/>
</dbReference>
<dbReference type="InterPro" id="IPR007052">
    <property type="entry name" value="CS_dom"/>
</dbReference>
<dbReference type="InterPro" id="IPR001199">
    <property type="entry name" value="Cyt_B5-like_heme/steroid-bd"/>
</dbReference>
<dbReference type="InterPro" id="IPR036400">
    <property type="entry name" value="Cyt_B5-like_heme/steroid_sf"/>
</dbReference>
<dbReference type="InterPro" id="IPR018506">
    <property type="entry name" value="Cyt_B5_heme-BS"/>
</dbReference>
<dbReference type="InterPro" id="IPR051872">
    <property type="entry name" value="Cytochrome_b5/Flavoprotein_Rdt"/>
</dbReference>
<dbReference type="InterPro" id="IPR017927">
    <property type="entry name" value="FAD-bd_FR_type"/>
</dbReference>
<dbReference type="InterPro" id="IPR039261">
    <property type="entry name" value="FNR_nucleotide-bd"/>
</dbReference>
<dbReference type="InterPro" id="IPR008978">
    <property type="entry name" value="HSP20-like_chaperone"/>
</dbReference>
<dbReference type="InterPro" id="IPR001433">
    <property type="entry name" value="OxRdtase_FAD/NAD-bd"/>
</dbReference>
<dbReference type="InterPro" id="IPR037908">
    <property type="entry name" value="p23_NCB5OR"/>
</dbReference>
<dbReference type="InterPro" id="IPR017938">
    <property type="entry name" value="Riboflavin_synthase-like_b-brl"/>
</dbReference>
<dbReference type="PANTHER" id="PTHR46237:SF1">
    <property type="entry name" value="CYTOCHROME B5 REDUCTASE 4"/>
    <property type="match status" value="1"/>
</dbReference>
<dbReference type="PANTHER" id="PTHR46237">
    <property type="entry name" value="CYTOCHROME B5 REDUCTASE 4 FAMILY MEMBER"/>
    <property type="match status" value="1"/>
</dbReference>
<dbReference type="Pfam" id="PF04969">
    <property type="entry name" value="CS"/>
    <property type="match status" value="1"/>
</dbReference>
<dbReference type="Pfam" id="PF00173">
    <property type="entry name" value="Cyt-b5"/>
    <property type="match status" value="1"/>
</dbReference>
<dbReference type="Pfam" id="PF00970">
    <property type="entry name" value="FAD_binding_6"/>
    <property type="match status" value="1"/>
</dbReference>
<dbReference type="Pfam" id="PF00175">
    <property type="entry name" value="NAD_binding_1"/>
    <property type="match status" value="1"/>
</dbReference>
<dbReference type="PRINTS" id="PR00406">
    <property type="entry name" value="CYTB5RDTASE"/>
</dbReference>
<dbReference type="PRINTS" id="PR00363">
    <property type="entry name" value="CYTOCHROMEB5"/>
</dbReference>
<dbReference type="SMART" id="SM01117">
    <property type="entry name" value="Cyt-b5"/>
    <property type="match status" value="1"/>
</dbReference>
<dbReference type="SUPFAM" id="SSF55856">
    <property type="entry name" value="Cytochrome b5-like heme/steroid binding domain"/>
    <property type="match status" value="1"/>
</dbReference>
<dbReference type="SUPFAM" id="SSF52343">
    <property type="entry name" value="Ferredoxin reductase-like, C-terminal NADP-linked domain"/>
    <property type="match status" value="1"/>
</dbReference>
<dbReference type="SUPFAM" id="SSF49764">
    <property type="entry name" value="HSP20-like chaperones"/>
    <property type="match status" value="1"/>
</dbReference>
<dbReference type="SUPFAM" id="SSF63380">
    <property type="entry name" value="Riboflavin synthase domain-like"/>
    <property type="match status" value="1"/>
</dbReference>
<dbReference type="PROSITE" id="PS51203">
    <property type="entry name" value="CS"/>
    <property type="match status" value="1"/>
</dbReference>
<dbReference type="PROSITE" id="PS00191">
    <property type="entry name" value="CYTOCHROME_B5_1"/>
    <property type="match status" value="1"/>
</dbReference>
<dbReference type="PROSITE" id="PS50255">
    <property type="entry name" value="CYTOCHROME_B5_2"/>
    <property type="match status" value="1"/>
</dbReference>
<dbReference type="PROSITE" id="PS51384">
    <property type="entry name" value="FAD_FR"/>
    <property type="match status" value="1"/>
</dbReference>
<name>NB5R4_RAT</name>
<feature type="chain" id="PRO_0000287558" description="Cytochrome b5 reductase 4">
    <location>
        <begin position="1"/>
        <end position="520"/>
    </location>
</feature>
<feature type="domain" description="Cytochrome b5 heme-binding" evidence="3">
    <location>
        <begin position="54"/>
        <end position="130"/>
    </location>
</feature>
<feature type="domain" description="CS" evidence="4">
    <location>
        <begin position="164"/>
        <end position="255"/>
    </location>
</feature>
<feature type="domain" description="FAD-binding FR-type" evidence="5">
    <location>
        <begin position="272"/>
        <end position="384"/>
    </location>
</feature>
<feature type="region of interest" description="Disordered" evidence="6">
    <location>
        <begin position="1"/>
        <end position="27"/>
    </location>
</feature>
<feature type="compositionally biased region" description="Polar residues" evidence="6">
    <location>
        <begin position="13"/>
        <end position="23"/>
    </location>
</feature>
<feature type="binding site" description="axial binding residue">
    <location>
        <position position="89"/>
    </location>
    <ligand>
        <name>heme</name>
        <dbReference type="ChEBI" id="CHEBI:30413"/>
    </ligand>
    <ligandPart>
        <name>Fe</name>
        <dbReference type="ChEBI" id="CHEBI:18248"/>
    </ligandPart>
</feature>
<feature type="binding site" description="axial binding residue">
    <location>
        <position position="112"/>
    </location>
    <ligand>
        <name>heme</name>
        <dbReference type="ChEBI" id="CHEBI:30413"/>
    </ligand>
    <ligandPart>
        <name>Fe</name>
        <dbReference type="ChEBI" id="CHEBI:18248"/>
    </ligandPart>
</feature>
<feature type="binding site" evidence="1">
    <location>
        <begin position="364"/>
        <end position="379"/>
    </location>
    <ligand>
        <name>FAD</name>
        <dbReference type="ChEBI" id="CHEBI:57692"/>
    </ligand>
</feature>
<feature type="binding site" evidence="1">
    <location>
        <begin position="391"/>
        <end position="423"/>
    </location>
    <ligand>
        <name>FAD</name>
        <dbReference type="ChEBI" id="CHEBI:57692"/>
    </ligand>
</feature>
<feature type="modified residue" description="N-acetylmethionine" evidence="2">
    <location>
        <position position="1"/>
    </location>
</feature>
<feature type="splice variant" id="VSP_025563" description="In isoform 2." evidence="9">
    <location>
        <begin position="318"/>
        <end position="368"/>
    </location>
</feature>
<feature type="mutagenesis site" description="Abolishes heme-binding but does not affect reductase activity." evidence="7">
    <original>H</original>
    <variation>A</variation>
    <variation>M</variation>
    <location>
        <position position="89"/>
    </location>
</feature>
<feature type="mutagenesis site" description="Abolishes heme-binding but does not affect reductase activity." evidence="7">
    <original>H</original>
    <variation>A</variation>
    <variation>M</variation>
    <location>
        <position position="112"/>
    </location>
</feature>
<feature type="sequence conflict" description="In Ref. 1; AAH80240." evidence="10" ref="1">
    <original>F</original>
    <variation>I</variation>
    <location>
        <position position="38"/>
    </location>
</feature>
<feature type="sequence conflict" description="In Ref. 2; AAG45053." evidence="10" ref="2">
    <original>Q</original>
    <variation>L</variation>
    <location>
        <position position="244"/>
    </location>
</feature>
<comment type="function">
    <text>NADH-cytochrome b5 reductase involved in endoplasmic reticulum stress response pathway. Plays a critical role in protecting pancreatic beta-cells against oxidant stress, possibly by protecting the cell from excess buildup of reactive oxygen species (ROS).</text>
</comment>
<comment type="catalytic activity">
    <reaction evidence="7">
        <text>2 Fe(III)-[cytochrome b5] + NADH = 2 Fe(II)-[cytochrome b5] + NAD(+) + H(+)</text>
        <dbReference type="Rhea" id="RHEA:46680"/>
        <dbReference type="Rhea" id="RHEA-COMP:10438"/>
        <dbReference type="Rhea" id="RHEA-COMP:10439"/>
        <dbReference type="ChEBI" id="CHEBI:15378"/>
        <dbReference type="ChEBI" id="CHEBI:29033"/>
        <dbReference type="ChEBI" id="CHEBI:29034"/>
        <dbReference type="ChEBI" id="CHEBI:57540"/>
        <dbReference type="ChEBI" id="CHEBI:57945"/>
        <dbReference type="EC" id="1.6.2.2"/>
    </reaction>
</comment>
<comment type="cofactor">
    <cofactor evidence="7">
        <name>FAD</name>
        <dbReference type="ChEBI" id="CHEBI:57692"/>
    </cofactor>
</comment>
<comment type="biophysicochemical properties">
    <kinetics>
        <KM evidence="7">28 uM for ferricyanide</KM>
        <KM evidence="7">1 uM for NADPH</KM>
        <KM evidence="7">7 uM for cytochrome c</KM>
    </kinetics>
</comment>
<comment type="subcellular location">
    <subcellularLocation>
        <location>Endoplasmic reticulum</location>
    </subcellularLocation>
    <text evidence="1">Soluble protein.</text>
</comment>
<comment type="alternative products">
    <event type="alternative splicing"/>
    <isoform>
        <id>Q68EJ0-1</id>
        <name>1</name>
        <sequence type="displayed"/>
    </isoform>
    <isoform>
        <id>Q68EJ0-2</id>
        <name>2</name>
        <name>cb5/cb5rDelta12</name>
        <sequence type="described" ref="VSP_025563"/>
    </isoform>
</comment>
<comment type="tissue specificity">
    <text evidence="8">Isoform 2 is expressed in testis, brain, skeletal muscle and in the male germline.</text>
</comment>
<comment type="similarity">
    <text evidence="10">Belongs to the flavoprotein pyridine nucleotide cytochrome reductase family.</text>
</comment>
<comment type="sequence caution" evidence="10">
    <conflict type="erroneous initiation">
        <sequence resource="EMBL-CDS" id="AAH80240"/>
    </conflict>
</comment>
<proteinExistence type="evidence at protein level"/>
<protein>
    <recommendedName>
        <fullName>Cytochrome b5 reductase 4</fullName>
        <ecNumber>1.6.2.2</ecNumber>
    </recommendedName>
    <alternativeName>
        <fullName>Flavohemoprotein b5/b5R</fullName>
        <shortName>b5+b5R</shortName>
    </alternativeName>
    <alternativeName>
        <fullName>N-terminal cytochrome b5 and cytochrome b5 oxidoreductase domain-containing protein</fullName>
    </alternativeName>
    <alternativeName>
        <fullName>cb5/cb5R</fullName>
    </alternativeName>
</protein>
<reference key="1">
    <citation type="journal article" date="2004" name="Genome Res.">
        <title>The status, quality, and expansion of the NIH full-length cDNA project: the Mammalian Gene Collection (MGC).</title>
        <authorList>
            <consortium name="The MGC Project Team"/>
        </authorList>
    </citation>
    <scope>NUCLEOTIDE SEQUENCE [LARGE SCALE MRNA] (ISOFORM 1)</scope>
    <source>
        <tissue>Lung</tissue>
    </source>
</reference>
<reference key="2">
    <citation type="journal article" date="2002" name="Arch. Biochem. Biophys.">
        <title>Heterologous expression of an endogenous rat cytochrome b(5)/cytochrome b(5) reductase fusion protein: identification of histidines 62 and 85 as the heme axial ligands.</title>
        <authorList>
            <person name="Davis C.A."/>
            <person name="Dhawan I.K."/>
            <person name="Johnson M.K."/>
            <person name="Barber M.J."/>
        </authorList>
    </citation>
    <scope>NUCLEOTIDE SEQUENCE [MRNA] OF 35-520 (ISOFORM 1)</scope>
    <scope>ENZYME ACTIVITY</scope>
    <scope>BIOPHYSICOCHEMICAL PROPERTIES</scope>
    <scope>FAD-BINDING</scope>
    <scope>HEME-BINDING AT HIS-89 AND HIS-112</scope>
    <scope>MUTAGENESIS OF HIS-89 AND HIS-112</scope>
</reference>
<reference key="3">
    <citation type="journal article" date="2004" name="Genomics">
        <title>Identification and characterization of a novel splice variant of mouse and rat cytochrome b5/cytochrome b5 reductase.</title>
        <authorList>
            <person name="Curry B.J."/>
            <person name="Roman S.D."/>
            <person name="Wallace C.A."/>
            <person name="Scott R."/>
            <person name="Miriami E."/>
            <person name="Aitken R.J."/>
        </authorList>
    </citation>
    <scope>NUCLEOTIDE SEQUENCE [MRNA] OF 35-520 (ISOFORMS 1 AND 2)</scope>
    <scope>TISSUE SPECIFICITY</scope>
    <source>
        <strain>Wistar</strain>
        <tissue>Testis</tissue>
    </source>
</reference>
<keyword id="KW-0007">Acetylation</keyword>
<keyword id="KW-0025">Alternative splicing</keyword>
<keyword id="KW-0256">Endoplasmic reticulum</keyword>
<keyword id="KW-0274">FAD</keyword>
<keyword id="KW-0285">Flavoprotein</keyword>
<keyword id="KW-0349">Heme</keyword>
<keyword id="KW-0408">Iron</keyword>
<keyword id="KW-0479">Metal-binding</keyword>
<keyword id="KW-0520">NAD</keyword>
<keyword id="KW-0560">Oxidoreductase</keyword>
<keyword id="KW-1185">Reference proteome</keyword>